<protein>
    <recommendedName>
        <fullName evidence="1">Large ribosomal subunit protein bL32</fullName>
    </recommendedName>
    <alternativeName>
        <fullName evidence="3">50S ribosomal protein L32</fullName>
    </alternativeName>
</protein>
<evidence type="ECO:0000255" key="1">
    <source>
        <dbReference type="HAMAP-Rule" id="MF_00340"/>
    </source>
</evidence>
<evidence type="ECO:0000256" key="2">
    <source>
        <dbReference type="SAM" id="MobiDB-lite"/>
    </source>
</evidence>
<evidence type="ECO:0000305" key="3"/>
<comment type="similarity">
    <text evidence="1">Belongs to the bacterial ribosomal protein bL32 family.</text>
</comment>
<keyword id="KW-0687">Ribonucleoprotein</keyword>
<keyword id="KW-0689">Ribosomal protein</keyword>
<gene>
    <name evidence="1" type="primary">rpmF</name>
    <name type="ordered locus">BF4090</name>
</gene>
<feature type="chain" id="PRO_0000225704" description="Large ribosomal subunit protein bL32">
    <location>
        <begin position="1"/>
        <end position="61"/>
    </location>
</feature>
<feature type="region of interest" description="Disordered" evidence="2">
    <location>
        <begin position="1"/>
        <end position="20"/>
    </location>
</feature>
<feature type="compositionally biased region" description="Basic residues" evidence="2">
    <location>
        <begin position="1"/>
        <end position="19"/>
    </location>
</feature>
<proteinExistence type="inferred from homology"/>
<reference key="1">
    <citation type="journal article" date="2004" name="Proc. Natl. Acad. Sci. U.S.A.">
        <title>Genomic analysis of Bacteroides fragilis reveals extensive DNA inversions regulating cell surface adaptation.</title>
        <authorList>
            <person name="Kuwahara T."/>
            <person name="Yamashita A."/>
            <person name="Hirakawa H."/>
            <person name="Nakayama H."/>
            <person name="Toh H."/>
            <person name="Okada N."/>
            <person name="Kuhara S."/>
            <person name="Hattori M."/>
            <person name="Hayashi T."/>
            <person name="Ohnishi Y."/>
        </authorList>
    </citation>
    <scope>NUCLEOTIDE SEQUENCE [LARGE SCALE GENOMIC DNA]</scope>
    <source>
        <strain>YCH46</strain>
    </source>
</reference>
<dbReference type="EMBL" id="AP006841">
    <property type="protein sequence ID" value="BAD50832.1"/>
    <property type="molecule type" value="Genomic_DNA"/>
</dbReference>
<dbReference type="RefSeq" id="WP_002562387.1">
    <property type="nucleotide sequence ID" value="NZ_UYXF01000013.1"/>
</dbReference>
<dbReference type="RefSeq" id="YP_101366.1">
    <property type="nucleotide sequence ID" value="NC_006347.1"/>
</dbReference>
<dbReference type="SMR" id="Q64NV0"/>
<dbReference type="STRING" id="295405.BF4090"/>
<dbReference type="GeneID" id="94549558"/>
<dbReference type="KEGG" id="bfr:BF4090"/>
<dbReference type="PATRIC" id="fig|295405.11.peg.3937"/>
<dbReference type="HOGENOM" id="CLU_129084_1_3_10"/>
<dbReference type="OrthoDB" id="9812874at2"/>
<dbReference type="Proteomes" id="UP000002197">
    <property type="component" value="Chromosome"/>
</dbReference>
<dbReference type="GO" id="GO:0015934">
    <property type="term" value="C:large ribosomal subunit"/>
    <property type="evidence" value="ECO:0007669"/>
    <property type="project" value="InterPro"/>
</dbReference>
<dbReference type="GO" id="GO:0003735">
    <property type="term" value="F:structural constituent of ribosome"/>
    <property type="evidence" value="ECO:0007669"/>
    <property type="project" value="InterPro"/>
</dbReference>
<dbReference type="GO" id="GO:0006412">
    <property type="term" value="P:translation"/>
    <property type="evidence" value="ECO:0007669"/>
    <property type="project" value="UniProtKB-UniRule"/>
</dbReference>
<dbReference type="HAMAP" id="MF_00340">
    <property type="entry name" value="Ribosomal_bL32"/>
    <property type="match status" value="1"/>
</dbReference>
<dbReference type="InterPro" id="IPR002677">
    <property type="entry name" value="Ribosomal_bL32"/>
</dbReference>
<dbReference type="InterPro" id="IPR044957">
    <property type="entry name" value="Ribosomal_bL32_bact"/>
</dbReference>
<dbReference type="InterPro" id="IPR011332">
    <property type="entry name" value="Ribosomal_zn-bd"/>
</dbReference>
<dbReference type="NCBIfam" id="TIGR01031">
    <property type="entry name" value="rpmF_bact"/>
    <property type="match status" value="1"/>
</dbReference>
<dbReference type="PANTHER" id="PTHR35534">
    <property type="entry name" value="50S RIBOSOMAL PROTEIN L32"/>
    <property type="match status" value="1"/>
</dbReference>
<dbReference type="PANTHER" id="PTHR35534:SF1">
    <property type="entry name" value="LARGE RIBOSOMAL SUBUNIT PROTEIN BL32"/>
    <property type="match status" value="1"/>
</dbReference>
<dbReference type="Pfam" id="PF01783">
    <property type="entry name" value="Ribosomal_L32p"/>
    <property type="match status" value="1"/>
</dbReference>
<dbReference type="SUPFAM" id="SSF57829">
    <property type="entry name" value="Zn-binding ribosomal proteins"/>
    <property type="match status" value="1"/>
</dbReference>
<organism>
    <name type="scientific">Bacteroides fragilis (strain YCH46)</name>
    <dbReference type="NCBI Taxonomy" id="295405"/>
    <lineage>
        <taxon>Bacteria</taxon>
        <taxon>Pseudomonadati</taxon>
        <taxon>Bacteroidota</taxon>
        <taxon>Bacteroidia</taxon>
        <taxon>Bacteroidales</taxon>
        <taxon>Bacteroidaceae</taxon>
        <taxon>Bacteroides</taxon>
    </lineage>
</organism>
<name>RL32_BACFR</name>
<accession>Q64NV0</accession>
<sequence>MAHPKRRQSKTRTAKRRTHDKAVAPTLAICPNCGEWHVYHTVCGACGYYRGKLAIEKEAAV</sequence>